<comment type="subcellular location">
    <subcellularLocation>
        <location evidence="1">Cell inner membrane</location>
        <topology evidence="1">Multi-pass membrane protein</topology>
    </subcellularLocation>
</comment>
<comment type="similarity">
    <text evidence="1">Belongs to the UPF0283 family.</text>
</comment>
<feature type="chain" id="PRO_1000064861" description="UPF0283 membrane protein YPTB2265">
    <location>
        <begin position="1"/>
        <end position="353"/>
    </location>
</feature>
<feature type="transmembrane region" description="Helical" evidence="1">
    <location>
        <begin position="71"/>
        <end position="91"/>
    </location>
</feature>
<feature type="transmembrane region" description="Helical" evidence="1">
    <location>
        <begin position="101"/>
        <end position="121"/>
    </location>
</feature>
<feature type="transmembrane region" description="Helical" evidence="1">
    <location>
        <begin position="214"/>
        <end position="234"/>
    </location>
</feature>
<accession>Q66A67</accession>
<reference key="1">
    <citation type="journal article" date="2004" name="Proc. Natl. Acad. Sci. U.S.A.">
        <title>Insights into the evolution of Yersinia pestis through whole-genome comparison with Yersinia pseudotuberculosis.</title>
        <authorList>
            <person name="Chain P.S.G."/>
            <person name="Carniel E."/>
            <person name="Larimer F.W."/>
            <person name="Lamerdin J."/>
            <person name="Stoutland P.O."/>
            <person name="Regala W.M."/>
            <person name="Georgescu A.M."/>
            <person name="Vergez L.M."/>
            <person name="Land M.L."/>
            <person name="Motin V.L."/>
            <person name="Brubaker R.R."/>
            <person name="Fowler J."/>
            <person name="Hinnebusch J."/>
            <person name="Marceau M."/>
            <person name="Medigue C."/>
            <person name="Simonet M."/>
            <person name="Chenal-Francisque V."/>
            <person name="Souza B."/>
            <person name="Dacheux D."/>
            <person name="Elliott J.M."/>
            <person name="Derbise A."/>
            <person name="Hauser L.J."/>
            <person name="Garcia E."/>
        </authorList>
    </citation>
    <scope>NUCLEOTIDE SEQUENCE [LARGE SCALE GENOMIC DNA]</scope>
    <source>
        <strain>IP32953</strain>
    </source>
</reference>
<evidence type="ECO:0000255" key="1">
    <source>
        <dbReference type="HAMAP-Rule" id="MF_01085"/>
    </source>
</evidence>
<keyword id="KW-0997">Cell inner membrane</keyword>
<keyword id="KW-1003">Cell membrane</keyword>
<keyword id="KW-0472">Membrane</keyword>
<keyword id="KW-0812">Transmembrane</keyword>
<keyword id="KW-1133">Transmembrane helix</keyword>
<dbReference type="EMBL" id="BX936398">
    <property type="protein sequence ID" value="CAH21503.1"/>
    <property type="molecule type" value="Genomic_DNA"/>
</dbReference>
<dbReference type="RefSeq" id="WP_002210980.1">
    <property type="nucleotide sequence ID" value="NZ_CP009712.1"/>
</dbReference>
<dbReference type="KEGG" id="ypo:BZ17_196"/>
<dbReference type="KEGG" id="yps:YPTB2265"/>
<dbReference type="PATRIC" id="fig|273123.14.peg.203"/>
<dbReference type="Proteomes" id="UP000001011">
    <property type="component" value="Chromosome"/>
</dbReference>
<dbReference type="GO" id="GO:0005886">
    <property type="term" value="C:plasma membrane"/>
    <property type="evidence" value="ECO:0007669"/>
    <property type="project" value="UniProtKB-SubCell"/>
</dbReference>
<dbReference type="HAMAP" id="MF_01085">
    <property type="entry name" value="UPF0283"/>
    <property type="match status" value="1"/>
</dbReference>
<dbReference type="InterPro" id="IPR021147">
    <property type="entry name" value="DUF697"/>
</dbReference>
<dbReference type="InterPro" id="IPR006507">
    <property type="entry name" value="UPF0283"/>
</dbReference>
<dbReference type="NCBIfam" id="TIGR01620">
    <property type="entry name" value="hyp_HI0043"/>
    <property type="match status" value="1"/>
</dbReference>
<dbReference type="PANTHER" id="PTHR39342">
    <property type="entry name" value="UPF0283 MEMBRANE PROTEIN YCJF"/>
    <property type="match status" value="1"/>
</dbReference>
<dbReference type="PANTHER" id="PTHR39342:SF1">
    <property type="entry name" value="UPF0283 MEMBRANE PROTEIN YCJF"/>
    <property type="match status" value="1"/>
</dbReference>
<dbReference type="Pfam" id="PF05128">
    <property type="entry name" value="DUF697"/>
    <property type="match status" value="1"/>
</dbReference>
<organism>
    <name type="scientific">Yersinia pseudotuberculosis serotype I (strain IP32953)</name>
    <dbReference type="NCBI Taxonomy" id="273123"/>
    <lineage>
        <taxon>Bacteria</taxon>
        <taxon>Pseudomonadati</taxon>
        <taxon>Pseudomonadota</taxon>
        <taxon>Gammaproteobacteria</taxon>
        <taxon>Enterobacterales</taxon>
        <taxon>Yersiniaceae</taxon>
        <taxon>Yersinia</taxon>
    </lineage>
</organism>
<proteinExistence type="inferred from homology"/>
<sequence>MSEPLKPRIDFEQPLQSLDEPVLKSAQAFDEQAAEKFYPAAPELDAEDEEGRVEGLVNAALKPKRSLWRKMVTAGMVILGASVIAQSVQWVNQAWQQQDWIALGATTAGGLIILAGVGSVVTEWRRLYHLRQRAEERDIARALLVSHGVGQGRVFCEKLARQAGLDQGHPALQRWQASLHETHNDREVVELYAKLVQPALDNQARAEISRYAAESALMIAVSPLALVDMAFIAWRNIRLINRIAALYGIELGYFSRIRLFRLVLLNIAFAGASELVREVGMDWLSQDLAARLSARAAQGIGAGLLTARLGIKAMELCRPLPWLEGDKPKLGDFRRQLMNQLKNTLPKKDKTAH</sequence>
<name>Y2265_YERPS</name>
<gene>
    <name type="ordered locus">YPTB2265</name>
</gene>
<protein>
    <recommendedName>
        <fullName evidence="1">UPF0283 membrane protein YPTB2265</fullName>
    </recommendedName>
</protein>